<comment type="function">
    <text evidence="1">Associates with the EF-Tu.GDP complex and induces the exchange of GDP to GTP. It remains bound to the aminoacyl-tRNA.EF-Tu.GTP complex up to the GTP hydrolysis stage on the ribosome.</text>
</comment>
<comment type="subcellular location">
    <subcellularLocation>
        <location evidence="1">Cytoplasm</location>
    </subcellularLocation>
</comment>
<comment type="similarity">
    <text evidence="1">Belongs to the EF-Ts family.</text>
</comment>
<organism>
    <name type="scientific">Coxiella burnetii (strain Dugway 5J108-111)</name>
    <dbReference type="NCBI Taxonomy" id="434922"/>
    <lineage>
        <taxon>Bacteria</taxon>
        <taxon>Pseudomonadati</taxon>
        <taxon>Pseudomonadota</taxon>
        <taxon>Gammaproteobacteria</taxon>
        <taxon>Legionellales</taxon>
        <taxon>Coxiellaceae</taxon>
        <taxon>Coxiella</taxon>
    </lineage>
</organism>
<gene>
    <name evidence="1" type="primary">tsf</name>
    <name type="ordered locus">CBUD_0609</name>
</gene>
<sequence length="296" mass="31820">MTTITPIMVKELRERTGAAVMACKKALQETNGDMEAAIDLLRKAGDAKAAKRAGKTAAEGVIVIAISKDQKKGFMAEVNSETDFVARDTNFMAFASKVAERGLAEGVSDVAATLALPIEPNSSSTIEDERKALVNRIGENIQIRRVASLSSDGVVGHYSHGGRIGVLLALDVPNPELAKGLAMHVAAFNPQAVSANQVSTEFVEKEKEIFLARAQETGKPANIIEKMVKGQVEKLLKEVSLEGQSFVKDPEKLVGDLLKAEKAKVLAFLRFEVGEGVEKESQNFADEVMAQVQGNR</sequence>
<reference key="1">
    <citation type="journal article" date="2009" name="Infect. Immun.">
        <title>Comparative genomics reveal extensive transposon-mediated genomic plasticity and diversity among potential effector proteins within the genus Coxiella.</title>
        <authorList>
            <person name="Beare P.A."/>
            <person name="Unsworth N."/>
            <person name="Andoh M."/>
            <person name="Voth D.E."/>
            <person name="Omsland A."/>
            <person name="Gilk S.D."/>
            <person name="Williams K.P."/>
            <person name="Sobral B.W."/>
            <person name="Kupko J.J. III"/>
            <person name="Porcella S.F."/>
            <person name="Samuel J.E."/>
            <person name="Heinzen R.A."/>
        </authorList>
    </citation>
    <scope>NUCLEOTIDE SEQUENCE [LARGE SCALE GENOMIC DNA]</scope>
    <source>
        <strain>Dugway 5J108-111</strain>
    </source>
</reference>
<feature type="chain" id="PRO_1000074859" description="Elongation factor Ts">
    <location>
        <begin position="1"/>
        <end position="296"/>
    </location>
</feature>
<feature type="region of interest" description="Involved in Mg(2+) ion dislocation from EF-Tu" evidence="1">
    <location>
        <begin position="82"/>
        <end position="85"/>
    </location>
</feature>
<keyword id="KW-0963">Cytoplasm</keyword>
<keyword id="KW-0251">Elongation factor</keyword>
<keyword id="KW-0648">Protein biosynthesis</keyword>
<accession>A9KBR4</accession>
<name>EFTS_COXBN</name>
<proteinExistence type="inferred from homology"/>
<dbReference type="EMBL" id="CP000733">
    <property type="protein sequence ID" value="ABS77863.1"/>
    <property type="molecule type" value="Genomic_DNA"/>
</dbReference>
<dbReference type="RefSeq" id="WP_005772548.1">
    <property type="nucleotide sequence ID" value="NC_009727.1"/>
</dbReference>
<dbReference type="SMR" id="A9KBR4"/>
<dbReference type="KEGG" id="cbd:CBUD_0609"/>
<dbReference type="HOGENOM" id="CLU_047155_0_2_6"/>
<dbReference type="Proteomes" id="UP000008555">
    <property type="component" value="Chromosome"/>
</dbReference>
<dbReference type="GO" id="GO:0005737">
    <property type="term" value="C:cytoplasm"/>
    <property type="evidence" value="ECO:0007669"/>
    <property type="project" value="UniProtKB-SubCell"/>
</dbReference>
<dbReference type="GO" id="GO:0003746">
    <property type="term" value="F:translation elongation factor activity"/>
    <property type="evidence" value="ECO:0007669"/>
    <property type="project" value="UniProtKB-UniRule"/>
</dbReference>
<dbReference type="CDD" id="cd14275">
    <property type="entry name" value="UBA_EF-Ts"/>
    <property type="match status" value="1"/>
</dbReference>
<dbReference type="FunFam" id="1.10.286.20:FF:000001">
    <property type="entry name" value="Elongation factor Ts"/>
    <property type="match status" value="1"/>
</dbReference>
<dbReference type="FunFam" id="1.10.8.10:FF:000001">
    <property type="entry name" value="Elongation factor Ts"/>
    <property type="match status" value="1"/>
</dbReference>
<dbReference type="FunFam" id="3.30.479.20:FF:000001">
    <property type="entry name" value="Elongation factor Ts"/>
    <property type="match status" value="1"/>
</dbReference>
<dbReference type="Gene3D" id="1.10.286.20">
    <property type="match status" value="1"/>
</dbReference>
<dbReference type="Gene3D" id="1.10.8.10">
    <property type="entry name" value="DNA helicase RuvA subunit, C-terminal domain"/>
    <property type="match status" value="1"/>
</dbReference>
<dbReference type="Gene3D" id="3.30.479.20">
    <property type="entry name" value="Elongation factor Ts, dimerisation domain"/>
    <property type="match status" value="2"/>
</dbReference>
<dbReference type="HAMAP" id="MF_00050">
    <property type="entry name" value="EF_Ts"/>
    <property type="match status" value="1"/>
</dbReference>
<dbReference type="InterPro" id="IPR036402">
    <property type="entry name" value="EF-Ts_dimer_sf"/>
</dbReference>
<dbReference type="InterPro" id="IPR001816">
    <property type="entry name" value="Transl_elong_EFTs/EF1B"/>
</dbReference>
<dbReference type="InterPro" id="IPR014039">
    <property type="entry name" value="Transl_elong_EFTs/EF1B_dimer"/>
</dbReference>
<dbReference type="InterPro" id="IPR018101">
    <property type="entry name" value="Transl_elong_Ts_CS"/>
</dbReference>
<dbReference type="InterPro" id="IPR009060">
    <property type="entry name" value="UBA-like_sf"/>
</dbReference>
<dbReference type="NCBIfam" id="TIGR00116">
    <property type="entry name" value="tsf"/>
    <property type="match status" value="1"/>
</dbReference>
<dbReference type="PANTHER" id="PTHR11741">
    <property type="entry name" value="ELONGATION FACTOR TS"/>
    <property type="match status" value="1"/>
</dbReference>
<dbReference type="PANTHER" id="PTHR11741:SF0">
    <property type="entry name" value="ELONGATION FACTOR TS, MITOCHONDRIAL"/>
    <property type="match status" value="1"/>
</dbReference>
<dbReference type="Pfam" id="PF00889">
    <property type="entry name" value="EF_TS"/>
    <property type="match status" value="1"/>
</dbReference>
<dbReference type="SUPFAM" id="SSF54713">
    <property type="entry name" value="Elongation factor Ts (EF-Ts), dimerisation domain"/>
    <property type="match status" value="2"/>
</dbReference>
<dbReference type="SUPFAM" id="SSF46934">
    <property type="entry name" value="UBA-like"/>
    <property type="match status" value="1"/>
</dbReference>
<dbReference type="PROSITE" id="PS01126">
    <property type="entry name" value="EF_TS_1"/>
    <property type="match status" value="1"/>
</dbReference>
<dbReference type="PROSITE" id="PS01127">
    <property type="entry name" value="EF_TS_2"/>
    <property type="match status" value="1"/>
</dbReference>
<protein>
    <recommendedName>
        <fullName evidence="1">Elongation factor Ts</fullName>
        <shortName evidence="1">EF-Ts</shortName>
    </recommendedName>
</protein>
<evidence type="ECO:0000255" key="1">
    <source>
        <dbReference type="HAMAP-Rule" id="MF_00050"/>
    </source>
</evidence>